<proteinExistence type="inferred from homology"/>
<reference key="1">
    <citation type="journal article" date="2007" name="DNA Res.">
        <title>Complete genomic structure of the bloom-forming toxic cyanobacterium Microcystis aeruginosa NIES-843.</title>
        <authorList>
            <person name="Kaneko T."/>
            <person name="Nakajima N."/>
            <person name="Okamoto S."/>
            <person name="Suzuki I."/>
            <person name="Tanabe Y."/>
            <person name="Tamaoki M."/>
            <person name="Nakamura Y."/>
            <person name="Kasai F."/>
            <person name="Watanabe A."/>
            <person name="Kawashima K."/>
            <person name="Kishida Y."/>
            <person name="Ono A."/>
            <person name="Shimizu Y."/>
            <person name="Takahashi C."/>
            <person name="Minami C."/>
            <person name="Fujishiro T."/>
            <person name="Kohara M."/>
            <person name="Katoh M."/>
            <person name="Nakazaki N."/>
            <person name="Nakayama S."/>
            <person name="Yamada M."/>
            <person name="Tabata S."/>
            <person name="Watanabe M.M."/>
        </authorList>
    </citation>
    <scope>NUCLEOTIDE SEQUENCE [LARGE SCALE GENOMIC DNA]</scope>
    <source>
        <strain>NIES-843 / IAM M-247</strain>
    </source>
</reference>
<comment type="catalytic activity">
    <reaction evidence="1">
        <text>N-(5-phospho-beta-D-ribosyl)anthranilate = 1-(2-carboxyphenylamino)-1-deoxy-D-ribulose 5-phosphate</text>
        <dbReference type="Rhea" id="RHEA:21540"/>
        <dbReference type="ChEBI" id="CHEBI:18277"/>
        <dbReference type="ChEBI" id="CHEBI:58613"/>
        <dbReference type="EC" id="5.3.1.24"/>
    </reaction>
</comment>
<comment type="pathway">
    <text evidence="1">Amino-acid biosynthesis; L-tryptophan biosynthesis; L-tryptophan from chorismate: step 3/5.</text>
</comment>
<comment type="similarity">
    <text evidence="1">Belongs to the TrpF family.</text>
</comment>
<dbReference type="EC" id="5.3.1.24" evidence="1"/>
<dbReference type="EMBL" id="AP009552">
    <property type="protein sequence ID" value="BAG03424.1"/>
    <property type="molecule type" value="Genomic_DNA"/>
</dbReference>
<dbReference type="RefSeq" id="WP_002798255.1">
    <property type="nucleotide sequence ID" value="NC_010296.1"/>
</dbReference>
<dbReference type="SMR" id="B0JNJ4"/>
<dbReference type="STRING" id="449447.MAE_36020"/>
<dbReference type="PaxDb" id="449447-MAE_36020"/>
<dbReference type="EnsemblBacteria" id="BAG03424">
    <property type="protein sequence ID" value="BAG03424"/>
    <property type="gene ID" value="MAE_36020"/>
</dbReference>
<dbReference type="KEGG" id="mar:MAE_36020"/>
<dbReference type="eggNOG" id="COG0135">
    <property type="taxonomic scope" value="Bacteria"/>
</dbReference>
<dbReference type="HOGENOM" id="CLU_076364_2_0_3"/>
<dbReference type="BioCyc" id="MAER449447:MAE_RS15585-MONOMER"/>
<dbReference type="UniPathway" id="UPA00035">
    <property type="reaction ID" value="UER00042"/>
</dbReference>
<dbReference type="Proteomes" id="UP000001510">
    <property type="component" value="Chromosome"/>
</dbReference>
<dbReference type="GO" id="GO:0004640">
    <property type="term" value="F:phosphoribosylanthranilate isomerase activity"/>
    <property type="evidence" value="ECO:0007669"/>
    <property type="project" value="UniProtKB-UniRule"/>
</dbReference>
<dbReference type="GO" id="GO:0000162">
    <property type="term" value="P:L-tryptophan biosynthetic process"/>
    <property type="evidence" value="ECO:0007669"/>
    <property type="project" value="UniProtKB-UniRule"/>
</dbReference>
<dbReference type="CDD" id="cd00405">
    <property type="entry name" value="PRAI"/>
    <property type="match status" value="1"/>
</dbReference>
<dbReference type="FunFam" id="3.20.20.70:FF:000075">
    <property type="entry name" value="Tryptophan biosynthesis protein TRP1"/>
    <property type="match status" value="1"/>
</dbReference>
<dbReference type="Gene3D" id="3.20.20.70">
    <property type="entry name" value="Aldolase class I"/>
    <property type="match status" value="1"/>
</dbReference>
<dbReference type="HAMAP" id="MF_00135">
    <property type="entry name" value="PRAI"/>
    <property type="match status" value="1"/>
</dbReference>
<dbReference type="InterPro" id="IPR013785">
    <property type="entry name" value="Aldolase_TIM"/>
</dbReference>
<dbReference type="InterPro" id="IPR001240">
    <property type="entry name" value="PRAI_dom"/>
</dbReference>
<dbReference type="InterPro" id="IPR011060">
    <property type="entry name" value="RibuloseP-bd_barrel"/>
</dbReference>
<dbReference type="InterPro" id="IPR044643">
    <property type="entry name" value="TrpF_fam"/>
</dbReference>
<dbReference type="NCBIfam" id="NF002298">
    <property type="entry name" value="PRK01222.1-4"/>
    <property type="match status" value="1"/>
</dbReference>
<dbReference type="PANTHER" id="PTHR42894">
    <property type="entry name" value="N-(5'-PHOSPHORIBOSYL)ANTHRANILATE ISOMERASE"/>
    <property type="match status" value="1"/>
</dbReference>
<dbReference type="PANTHER" id="PTHR42894:SF1">
    <property type="entry name" value="N-(5'-PHOSPHORIBOSYL)ANTHRANILATE ISOMERASE"/>
    <property type="match status" value="1"/>
</dbReference>
<dbReference type="Pfam" id="PF00697">
    <property type="entry name" value="PRAI"/>
    <property type="match status" value="1"/>
</dbReference>
<dbReference type="SUPFAM" id="SSF51366">
    <property type="entry name" value="Ribulose-phoshate binding barrel"/>
    <property type="match status" value="1"/>
</dbReference>
<keyword id="KW-0028">Amino-acid biosynthesis</keyword>
<keyword id="KW-0057">Aromatic amino acid biosynthesis</keyword>
<keyword id="KW-0413">Isomerase</keyword>
<keyword id="KW-0822">Tryptophan biosynthesis</keyword>
<sequence length="212" mass="23576">MRIKICGITQPDQGRAIATCGATALGFILVPSSPRYVKIEQINAITAAIPDKIDFIGVFADEQPEIIQQIIVKTPLTSVQLHGKESPEYCQRLRQLLPDREIIKALRIKDRESWEKSAIYFNSVDTLLLDAYHPQLLGGTGHTLDWQALASFSPPLPWFLAGGLNPDNISEALTRLHPQGIDVSSGVERSPGDKDLKKVALLLERLQKFRDQ</sequence>
<protein>
    <recommendedName>
        <fullName evidence="1">N-(5'-phosphoribosyl)anthranilate isomerase</fullName>
        <shortName evidence="1">PRAI</shortName>
        <ecNumber evidence="1">5.3.1.24</ecNumber>
    </recommendedName>
</protein>
<evidence type="ECO:0000255" key="1">
    <source>
        <dbReference type="HAMAP-Rule" id="MF_00135"/>
    </source>
</evidence>
<name>TRPF_MICAN</name>
<organism>
    <name type="scientific">Microcystis aeruginosa (strain NIES-843 / IAM M-2473)</name>
    <dbReference type="NCBI Taxonomy" id="449447"/>
    <lineage>
        <taxon>Bacteria</taxon>
        <taxon>Bacillati</taxon>
        <taxon>Cyanobacteriota</taxon>
        <taxon>Cyanophyceae</taxon>
        <taxon>Oscillatoriophycideae</taxon>
        <taxon>Chroococcales</taxon>
        <taxon>Microcystaceae</taxon>
        <taxon>Microcystis</taxon>
    </lineage>
</organism>
<feature type="chain" id="PRO_1000076437" description="N-(5'-phosphoribosyl)anthranilate isomerase">
    <location>
        <begin position="1"/>
        <end position="212"/>
    </location>
</feature>
<gene>
    <name evidence="1" type="primary">trpF</name>
    <name type="ordered locus">MAE_36020</name>
</gene>
<accession>B0JNJ4</accession>